<organism>
    <name type="scientific">Neurospora crassa (strain ATCC 24698 / 74-OR23-1A / CBS 708.71 / DSM 1257 / FGSC 987)</name>
    <dbReference type="NCBI Taxonomy" id="367110"/>
    <lineage>
        <taxon>Eukaryota</taxon>
        <taxon>Fungi</taxon>
        <taxon>Dikarya</taxon>
        <taxon>Ascomycota</taxon>
        <taxon>Pezizomycotina</taxon>
        <taxon>Sordariomycetes</taxon>
        <taxon>Sordariomycetidae</taxon>
        <taxon>Sordariales</taxon>
        <taxon>Sordariaceae</taxon>
        <taxon>Neurospora</taxon>
    </lineage>
</organism>
<evidence type="ECO:0000250" key="1"/>
<evidence type="ECO:0000256" key="2">
    <source>
        <dbReference type="SAM" id="MobiDB-lite"/>
    </source>
</evidence>
<evidence type="ECO:0000305" key="3"/>
<dbReference type="EC" id="3.5.4.16"/>
<dbReference type="EMBL" id="AL513410">
    <property type="protein sequence ID" value="CAC28574.1"/>
    <property type="molecule type" value="Genomic_DNA"/>
</dbReference>
<dbReference type="EMBL" id="CM002240">
    <property type="protein sequence ID" value="EAA29459.3"/>
    <property type="molecule type" value="Genomic_DNA"/>
</dbReference>
<dbReference type="EMBL" id="Z49758">
    <property type="protein sequence ID" value="CAA89828.1"/>
    <property type="molecule type" value="mRNA"/>
</dbReference>
<dbReference type="RefSeq" id="XP_958695.3">
    <property type="nucleotide sequence ID" value="XM_953602.3"/>
</dbReference>
<dbReference type="SMR" id="P51599"/>
<dbReference type="FunCoup" id="P51599">
    <property type="interactions" value="350"/>
</dbReference>
<dbReference type="STRING" id="367110.P51599"/>
<dbReference type="PaxDb" id="5141-EFNCRP00000007941"/>
<dbReference type="EnsemblFungi" id="EAA29459">
    <property type="protein sequence ID" value="EAA29459"/>
    <property type="gene ID" value="NCU07774"/>
</dbReference>
<dbReference type="GeneID" id="3874842"/>
<dbReference type="KEGG" id="ncr:NCU07774"/>
<dbReference type="VEuPathDB" id="FungiDB:NCU07774"/>
<dbReference type="HOGENOM" id="CLU_049768_3_4_1"/>
<dbReference type="InParanoid" id="P51599"/>
<dbReference type="OrthoDB" id="4966at2759"/>
<dbReference type="UniPathway" id="UPA00848">
    <property type="reaction ID" value="UER00151"/>
</dbReference>
<dbReference type="Proteomes" id="UP000001805">
    <property type="component" value="Chromosome 2, Linkage Group V"/>
</dbReference>
<dbReference type="GO" id="GO:0005737">
    <property type="term" value="C:cytoplasm"/>
    <property type="evidence" value="ECO:0000318"/>
    <property type="project" value="GO_Central"/>
</dbReference>
<dbReference type="GO" id="GO:0005525">
    <property type="term" value="F:GTP binding"/>
    <property type="evidence" value="ECO:0000318"/>
    <property type="project" value="GO_Central"/>
</dbReference>
<dbReference type="GO" id="GO:0003934">
    <property type="term" value="F:GTP cyclohydrolase I activity"/>
    <property type="evidence" value="ECO:0000318"/>
    <property type="project" value="GO_Central"/>
</dbReference>
<dbReference type="GO" id="GO:0008270">
    <property type="term" value="F:zinc ion binding"/>
    <property type="evidence" value="ECO:0000318"/>
    <property type="project" value="GO_Central"/>
</dbReference>
<dbReference type="GO" id="GO:0046656">
    <property type="term" value="P:folic acid biosynthetic process"/>
    <property type="evidence" value="ECO:0007669"/>
    <property type="project" value="UniProtKB-KW"/>
</dbReference>
<dbReference type="GO" id="GO:0006729">
    <property type="term" value="P:tetrahydrobiopterin biosynthetic process"/>
    <property type="evidence" value="ECO:0000318"/>
    <property type="project" value="GO_Central"/>
</dbReference>
<dbReference type="GO" id="GO:0046654">
    <property type="term" value="P:tetrahydrofolate biosynthetic process"/>
    <property type="evidence" value="ECO:0007669"/>
    <property type="project" value="InterPro"/>
</dbReference>
<dbReference type="CDD" id="cd00642">
    <property type="entry name" value="GTP_cyclohydro1"/>
    <property type="match status" value="1"/>
</dbReference>
<dbReference type="FunFam" id="1.10.286.10:FF:000003">
    <property type="entry name" value="GTP cyclohydrolase 1"/>
    <property type="match status" value="1"/>
</dbReference>
<dbReference type="FunFam" id="3.30.1130.10:FF:000012">
    <property type="entry name" value="GTP cyclohydrolase 1"/>
    <property type="match status" value="1"/>
</dbReference>
<dbReference type="Gene3D" id="1.10.286.10">
    <property type="match status" value="1"/>
</dbReference>
<dbReference type="Gene3D" id="3.30.1130.10">
    <property type="match status" value="1"/>
</dbReference>
<dbReference type="HAMAP" id="MF_00223">
    <property type="entry name" value="FolE"/>
    <property type="match status" value="1"/>
</dbReference>
<dbReference type="InterPro" id="IPR043133">
    <property type="entry name" value="GTP-CH-I_C/QueF"/>
</dbReference>
<dbReference type="InterPro" id="IPR043134">
    <property type="entry name" value="GTP-CH-I_N"/>
</dbReference>
<dbReference type="InterPro" id="IPR001474">
    <property type="entry name" value="GTP_CycHdrlase_I"/>
</dbReference>
<dbReference type="InterPro" id="IPR018234">
    <property type="entry name" value="GTP_CycHdrlase_I_CS"/>
</dbReference>
<dbReference type="InterPro" id="IPR020602">
    <property type="entry name" value="GTP_CycHdrlase_I_dom"/>
</dbReference>
<dbReference type="NCBIfam" id="TIGR00063">
    <property type="entry name" value="folE"/>
    <property type="match status" value="1"/>
</dbReference>
<dbReference type="NCBIfam" id="NF006825">
    <property type="entry name" value="PRK09347.1-2"/>
    <property type="match status" value="1"/>
</dbReference>
<dbReference type="NCBIfam" id="NF006826">
    <property type="entry name" value="PRK09347.1-3"/>
    <property type="match status" value="1"/>
</dbReference>
<dbReference type="PANTHER" id="PTHR11109:SF7">
    <property type="entry name" value="GTP CYCLOHYDROLASE 1"/>
    <property type="match status" value="1"/>
</dbReference>
<dbReference type="PANTHER" id="PTHR11109">
    <property type="entry name" value="GTP CYCLOHYDROLASE I"/>
    <property type="match status" value="1"/>
</dbReference>
<dbReference type="Pfam" id="PF01227">
    <property type="entry name" value="GTP_cyclohydroI"/>
    <property type="match status" value="1"/>
</dbReference>
<dbReference type="SUPFAM" id="SSF55620">
    <property type="entry name" value="Tetrahydrobiopterin biosynthesis enzymes-like"/>
    <property type="match status" value="1"/>
</dbReference>
<dbReference type="PROSITE" id="PS00859">
    <property type="entry name" value="GTP_CYCLOHYDROL_1_1"/>
    <property type="match status" value="1"/>
</dbReference>
<dbReference type="PROSITE" id="PS00860">
    <property type="entry name" value="GTP_CYCLOHYDROL_1_2"/>
    <property type="match status" value="1"/>
</dbReference>
<accession>P51599</accession>
<accession>Q7RV90</accession>
<accession>Q9C2R6</accession>
<keyword id="KW-0021">Allosteric enzyme</keyword>
<keyword id="KW-0289">Folate biosynthesis</keyword>
<keyword id="KW-0342">GTP-binding</keyword>
<keyword id="KW-0378">Hydrolase</keyword>
<keyword id="KW-0479">Metal-binding</keyword>
<keyword id="KW-0547">Nucleotide-binding</keyword>
<keyword id="KW-1185">Reference proteome</keyword>
<keyword id="KW-0862">Zinc</keyword>
<gene>
    <name type="primary">gch-1</name>
    <name type="ORF">104H10.80</name>
    <name type="ORF">NCU07774</name>
</gene>
<feature type="chain" id="PRO_0000119486" description="GTP cyclohydrolase 1">
    <location>
        <begin position="1"/>
        <end position="313"/>
    </location>
</feature>
<feature type="region of interest" description="Disordered" evidence="2">
    <location>
        <begin position="1"/>
        <end position="120"/>
    </location>
</feature>
<feature type="compositionally biased region" description="Basic and acidic residues" evidence="2">
    <location>
        <begin position="1"/>
        <end position="10"/>
    </location>
</feature>
<feature type="compositionally biased region" description="Low complexity" evidence="2">
    <location>
        <begin position="11"/>
        <end position="20"/>
    </location>
</feature>
<feature type="compositionally biased region" description="Basic residues" evidence="2">
    <location>
        <begin position="29"/>
        <end position="39"/>
    </location>
</feature>
<feature type="compositionally biased region" description="Basic and acidic residues" evidence="2">
    <location>
        <begin position="40"/>
        <end position="64"/>
    </location>
</feature>
<feature type="compositionally biased region" description="Low complexity" evidence="2">
    <location>
        <begin position="72"/>
        <end position="102"/>
    </location>
</feature>
<feature type="binding site" evidence="1">
    <location>
        <position position="202"/>
    </location>
    <ligand>
        <name>Zn(2+)</name>
        <dbReference type="ChEBI" id="CHEBI:29105"/>
    </ligand>
</feature>
<feature type="binding site" evidence="1">
    <location>
        <position position="205"/>
    </location>
    <ligand>
        <name>Zn(2+)</name>
        <dbReference type="ChEBI" id="CHEBI:29105"/>
    </ligand>
</feature>
<feature type="binding site" evidence="1">
    <location>
        <position position="273"/>
    </location>
    <ligand>
        <name>Zn(2+)</name>
        <dbReference type="ChEBI" id="CHEBI:29105"/>
    </ligand>
</feature>
<feature type="sequence conflict" description="In Ref. 3; CAA89828." evidence="3" ref="3">
    <original>GHN</original>
    <variation>DHD</variation>
    <location>
        <begin position="186"/>
        <end position="188"/>
    </location>
</feature>
<reference key="1">
    <citation type="journal article" date="2003" name="Nucleic Acids Res.">
        <title>What's in the genome of a filamentous fungus? Analysis of the Neurospora genome sequence.</title>
        <authorList>
            <person name="Mannhaupt G."/>
            <person name="Montrone C."/>
            <person name="Haase D."/>
            <person name="Mewes H.-W."/>
            <person name="Aign V."/>
            <person name="Hoheisel J.D."/>
            <person name="Fartmann B."/>
            <person name="Nyakatura G."/>
            <person name="Kempken F."/>
            <person name="Maier J."/>
            <person name="Schulte U."/>
        </authorList>
    </citation>
    <scope>NUCLEOTIDE SEQUENCE [LARGE SCALE GENOMIC DNA]</scope>
    <source>
        <strain>ATCC 24698 / 74-OR23-1A / CBS 708.71 / DSM 1257 / FGSC 987</strain>
    </source>
</reference>
<reference key="2">
    <citation type="journal article" date="2003" name="Nature">
        <title>The genome sequence of the filamentous fungus Neurospora crassa.</title>
        <authorList>
            <person name="Galagan J.E."/>
            <person name="Calvo S.E."/>
            <person name="Borkovich K.A."/>
            <person name="Selker E.U."/>
            <person name="Read N.D."/>
            <person name="Jaffe D.B."/>
            <person name="FitzHugh W."/>
            <person name="Ma L.-J."/>
            <person name="Smirnov S."/>
            <person name="Purcell S."/>
            <person name="Rehman B."/>
            <person name="Elkins T."/>
            <person name="Engels R."/>
            <person name="Wang S."/>
            <person name="Nielsen C.B."/>
            <person name="Butler J."/>
            <person name="Endrizzi M."/>
            <person name="Qui D."/>
            <person name="Ianakiev P."/>
            <person name="Bell-Pedersen D."/>
            <person name="Nelson M.A."/>
            <person name="Werner-Washburne M."/>
            <person name="Selitrennikoff C.P."/>
            <person name="Kinsey J.A."/>
            <person name="Braun E.L."/>
            <person name="Zelter A."/>
            <person name="Schulte U."/>
            <person name="Kothe G.O."/>
            <person name="Jedd G."/>
            <person name="Mewes H.-W."/>
            <person name="Staben C."/>
            <person name="Marcotte E."/>
            <person name="Greenberg D."/>
            <person name="Roy A."/>
            <person name="Foley K."/>
            <person name="Naylor J."/>
            <person name="Stange-Thomann N."/>
            <person name="Barrett R."/>
            <person name="Gnerre S."/>
            <person name="Kamal M."/>
            <person name="Kamvysselis M."/>
            <person name="Mauceli E.W."/>
            <person name="Bielke C."/>
            <person name="Rudd S."/>
            <person name="Frishman D."/>
            <person name="Krystofova S."/>
            <person name="Rasmussen C."/>
            <person name="Metzenberg R.L."/>
            <person name="Perkins D.D."/>
            <person name="Kroken S."/>
            <person name="Cogoni C."/>
            <person name="Macino G."/>
            <person name="Catcheside D.E.A."/>
            <person name="Li W."/>
            <person name="Pratt R.J."/>
            <person name="Osmani S.A."/>
            <person name="DeSouza C.P.C."/>
            <person name="Glass N.L."/>
            <person name="Orbach M.J."/>
            <person name="Berglund J.A."/>
            <person name="Voelker R."/>
            <person name="Yarden O."/>
            <person name="Plamann M."/>
            <person name="Seiler S."/>
            <person name="Dunlap J.C."/>
            <person name="Radford A."/>
            <person name="Aramayo R."/>
            <person name="Natvig D.O."/>
            <person name="Alex L.A."/>
            <person name="Mannhaupt G."/>
            <person name="Ebbole D.J."/>
            <person name="Freitag M."/>
            <person name="Paulsen I."/>
            <person name="Sachs M.S."/>
            <person name="Lander E.S."/>
            <person name="Nusbaum C."/>
            <person name="Birren B.W."/>
        </authorList>
    </citation>
    <scope>NUCLEOTIDE SEQUENCE [LARGE SCALE GENOMIC DNA]</scope>
    <source>
        <strain>ATCC 24698 / 74-OR23-1A / CBS 708.71 / DSM 1257 / FGSC 987</strain>
    </source>
</reference>
<reference key="3">
    <citation type="journal article" date="1995" name="Biochem. Biophys. Res. Commun.">
        <title>Homology cloning of GTP-cyclohydrolase I from various unrelated eukaryotes by reverse-transcription polymerase chain reaction using a general set of degenerate primers.</title>
        <authorList>
            <person name="Maier J."/>
            <person name="Witter K."/>
            <person name="Guetlich M."/>
            <person name="Ziegler I."/>
            <person name="Werner T."/>
            <person name="Ninnemann H."/>
        </authorList>
    </citation>
    <scope>NUCLEOTIDE SEQUENCE [MRNA] OF 185-278</scope>
    <source>
        <strain>BD AL-2</strain>
    </source>
</reference>
<protein>
    <recommendedName>
        <fullName>GTP cyclohydrolase 1</fullName>
        <ecNumber>3.5.4.16</ecNumber>
    </recommendedName>
    <alternativeName>
        <fullName>GTP cyclohydrolase I</fullName>
        <shortName>GTP-CH-I</shortName>
    </alternativeName>
</protein>
<proteinExistence type="evidence at transcript level"/>
<sequence length="313" mass="34471">MAQETTRDGSDSPSGSVSPPIANGTNNKKDKKSSKKRAHSSGERRSSVSKPARDPSDKPEESPSKKKKRKTTSSTAAAAVPSTITEEVSPSTSVTRSPSPVIDFDGLSRPSRGTRERLEETEAQKQERLDKMKGAVRTLLECIGEDPDREGLLATPERYAKAMLFLTKGYQENVRDIVNGAIFQEGHNEMVIVKDIEVFSMCEHHLVPFTGKMHIGYIPSNAVIGISKLPRIAELFARRLQIQERLTKEVANAIMEILKPQGVAVVMESSHLCMVMRGVQKTTSSTITSCVLGCFESREKTRLEFLSLIGVNR</sequence>
<name>GCH1_NEUCR</name>
<comment type="function">
    <text>GTP cyclohydrolase 1 is the first enzyme in the biosynthetic pathway leading to folic acid.</text>
</comment>
<comment type="catalytic activity">
    <reaction>
        <text>GTP + H2O = 7,8-dihydroneopterin 3'-triphosphate + formate + H(+)</text>
        <dbReference type="Rhea" id="RHEA:17473"/>
        <dbReference type="ChEBI" id="CHEBI:15377"/>
        <dbReference type="ChEBI" id="CHEBI:15378"/>
        <dbReference type="ChEBI" id="CHEBI:15740"/>
        <dbReference type="ChEBI" id="CHEBI:37565"/>
        <dbReference type="ChEBI" id="CHEBI:58462"/>
        <dbReference type="EC" id="3.5.4.16"/>
    </reaction>
</comment>
<comment type="activity regulation">
    <text evidence="1">GTP shows a positive allosteric effect, and tetrahydrobiopterin inhibits the enzyme activity.</text>
</comment>
<comment type="pathway">
    <text>Cofactor biosynthesis; 7,8-dihydroneopterin triphosphate biosynthesis; 7,8-dihydroneopterin triphosphate from GTP: step 1/1.</text>
</comment>
<comment type="subunit">
    <text evidence="1">Toroid-shaped homodecamer, composed of two pentamers of five dimers.</text>
</comment>
<comment type="similarity">
    <text evidence="3">Belongs to the GTP cyclohydrolase I family.</text>
</comment>